<proteinExistence type="inferred from homology"/>
<dbReference type="EC" id="5.1.1.1" evidence="1"/>
<dbReference type="EMBL" id="CP001147">
    <property type="protein sequence ID" value="ACI20586.1"/>
    <property type="molecule type" value="Genomic_DNA"/>
</dbReference>
<dbReference type="RefSeq" id="WP_012545322.1">
    <property type="nucleotide sequence ID" value="NC_011296.1"/>
</dbReference>
<dbReference type="RefSeq" id="YP_002248188.1">
    <property type="nucleotide sequence ID" value="NC_011296.1"/>
</dbReference>
<dbReference type="SMR" id="B5YIM9"/>
<dbReference type="FunCoup" id="B5YIM9">
    <property type="interactions" value="343"/>
</dbReference>
<dbReference type="STRING" id="289376.THEYE_A0341"/>
<dbReference type="EnsemblBacteria" id="ACI20586">
    <property type="protein sequence ID" value="ACI20586"/>
    <property type="gene ID" value="THEYE_A0341"/>
</dbReference>
<dbReference type="KEGG" id="tye:THEYE_A0341"/>
<dbReference type="PATRIC" id="fig|289376.4.peg.334"/>
<dbReference type="eggNOG" id="COG0787">
    <property type="taxonomic scope" value="Bacteria"/>
</dbReference>
<dbReference type="HOGENOM" id="CLU_028393_2_2_0"/>
<dbReference type="InParanoid" id="B5YIM9"/>
<dbReference type="OrthoDB" id="9813814at2"/>
<dbReference type="UniPathway" id="UPA00042">
    <property type="reaction ID" value="UER00497"/>
</dbReference>
<dbReference type="Proteomes" id="UP000000718">
    <property type="component" value="Chromosome"/>
</dbReference>
<dbReference type="GO" id="GO:0005829">
    <property type="term" value="C:cytosol"/>
    <property type="evidence" value="ECO:0000318"/>
    <property type="project" value="GO_Central"/>
</dbReference>
<dbReference type="GO" id="GO:0008784">
    <property type="term" value="F:alanine racemase activity"/>
    <property type="evidence" value="ECO:0000318"/>
    <property type="project" value="GO_Central"/>
</dbReference>
<dbReference type="GO" id="GO:0030170">
    <property type="term" value="F:pyridoxal phosphate binding"/>
    <property type="evidence" value="ECO:0000318"/>
    <property type="project" value="GO_Central"/>
</dbReference>
<dbReference type="GO" id="GO:0030632">
    <property type="term" value="P:D-alanine biosynthetic process"/>
    <property type="evidence" value="ECO:0000318"/>
    <property type="project" value="GO_Central"/>
</dbReference>
<dbReference type="CDD" id="cd00430">
    <property type="entry name" value="PLPDE_III_AR"/>
    <property type="match status" value="1"/>
</dbReference>
<dbReference type="FunFam" id="3.20.20.10:FF:000002">
    <property type="entry name" value="Alanine racemase"/>
    <property type="match status" value="1"/>
</dbReference>
<dbReference type="Gene3D" id="3.20.20.10">
    <property type="entry name" value="Alanine racemase"/>
    <property type="match status" value="1"/>
</dbReference>
<dbReference type="Gene3D" id="2.40.37.10">
    <property type="entry name" value="Lyase, Ornithine Decarboxylase, Chain A, domain 1"/>
    <property type="match status" value="1"/>
</dbReference>
<dbReference type="HAMAP" id="MF_01201">
    <property type="entry name" value="Ala_racemase"/>
    <property type="match status" value="1"/>
</dbReference>
<dbReference type="InterPro" id="IPR000821">
    <property type="entry name" value="Ala_racemase"/>
</dbReference>
<dbReference type="InterPro" id="IPR009006">
    <property type="entry name" value="Ala_racemase/Decarboxylase_C"/>
</dbReference>
<dbReference type="InterPro" id="IPR011079">
    <property type="entry name" value="Ala_racemase_C"/>
</dbReference>
<dbReference type="InterPro" id="IPR001608">
    <property type="entry name" value="Ala_racemase_N"/>
</dbReference>
<dbReference type="InterPro" id="IPR020622">
    <property type="entry name" value="Ala_racemase_pyridoxalP-BS"/>
</dbReference>
<dbReference type="InterPro" id="IPR029066">
    <property type="entry name" value="PLP-binding_barrel"/>
</dbReference>
<dbReference type="NCBIfam" id="TIGR00492">
    <property type="entry name" value="alr"/>
    <property type="match status" value="1"/>
</dbReference>
<dbReference type="PANTHER" id="PTHR30511">
    <property type="entry name" value="ALANINE RACEMASE"/>
    <property type="match status" value="1"/>
</dbReference>
<dbReference type="PANTHER" id="PTHR30511:SF0">
    <property type="entry name" value="ALANINE RACEMASE, CATABOLIC-RELATED"/>
    <property type="match status" value="1"/>
</dbReference>
<dbReference type="Pfam" id="PF00842">
    <property type="entry name" value="Ala_racemase_C"/>
    <property type="match status" value="1"/>
</dbReference>
<dbReference type="Pfam" id="PF01168">
    <property type="entry name" value="Ala_racemase_N"/>
    <property type="match status" value="1"/>
</dbReference>
<dbReference type="PRINTS" id="PR00992">
    <property type="entry name" value="ALARACEMASE"/>
</dbReference>
<dbReference type="SMART" id="SM01005">
    <property type="entry name" value="Ala_racemase_C"/>
    <property type="match status" value="1"/>
</dbReference>
<dbReference type="SUPFAM" id="SSF50621">
    <property type="entry name" value="Alanine racemase C-terminal domain-like"/>
    <property type="match status" value="1"/>
</dbReference>
<dbReference type="SUPFAM" id="SSF51419">
    <property type="entry name" value="PLP-binding barrel"/>
    <property type="match status" value="1"/>
</dbReference>
<dbReference type="PROSITE" id="PS00395">
    <property type="entry name" value="ALANINE_RACEMASE"/>
    <property type="match status" value="1"/>
</dbReference>
<feature type="chain" id="PRO_1000213843" description="Alanine racemase">
    <location>
        <begin position="1"/>
        <end position="363"/>
    </location>
</feature>
<feature type="active site" description="Proton acceptor; specific for D-alanine" evidence="1">
    <location>
        <position position="39"/>
    </location>
</feature>
<feature type="active site" description="Proton acceptor; specific for L-alanine" evidence="1">
    <location>
        <position position="251"/>
    </location>
</feature>
<feature type="binding site" evidence="1">
    <location>
        <position position="134"/>
    </location>
    <ligand>
        <name>substrate</name>
    </ligand>
</feature>
<feature type="binding site" evidence="1">
    <location>
        <position position="299"/>
    </location>
    <ligand>
        <name>substrate</name>
    </ligand>
</feature>
<feature type="modified residue" description="N6-(pyridoxal phosphate)lysine" evidence="1">
    <location>
        <position position="39"/>
    </location>
</feature>
<comment type="function">
    <text evidence="1">Catalyzes the interconversion of L-alanine and D-alanine. May also act on other amino acids.</text>
</comment>
<comment type="catalytic activity">
    <reaction evidence="1">
        <text>L-alanine = D-alanine</text>
        <dbReference type="Rhea" id="RHEA:20249"/>
        <dbReference type="ChEBI" id="CHEBI:57416"/>
        <dbReference type="ChEBI" id="CHEBI:57972"/>
        <dbReference type="EC" id="5.1.1.1"/>
    </reaction>
</comment>
<comment type="cofactor">
    <cofactor evidence="1">
        <name>pyridoxal 5'-phosphate</name>
        <dbReference type="ChEBI" id="CHEBI:597326"/>
    </cofactor>
</comment>
<comment type="pathway">
    <text evidence="1">Amino-acid biosynthesis; D-alanine biosynthesis; D-alanine from L-alanine: step 1/1.</text>
</comment>
<comment type="similarity">
    <text evidence="1">Belongs to the alanine racemase family.</text>
</comment>
<evidence type="ECO:0000255" key="1">
    <source>
        <dbReference type="HAMAP-Rule" id="MF_01201"/>
    </source>
</evidence>
<name>ALR_THEYD</name>
<protein>
    <recommendedName>
        <fullName evidence="1">Alanine racemase</fullName>
        <ecNumber evidence="1">5.1.1.1</ecNumber>
    </recommendedName>
</protein>
<accession>B5YIM9</accession>
<reference key="1">
    <citation type="submission" date="2008-08" db="EMBL/GenBank/DDBJ databases">
        <title>The complete genome sequence of Thermodesulfovibrio yellowstonii strain ATCC 51303 / DSM 11347 / YP87.</title>
        <authorList>
            <person name="Dodson R.J."/>
            <person name="Durkin A.S."/>
            <person name="Wu M."/>
            <person name="Eisen J."/>
            <person name="Sutton G."/>
        </authorList>
    </citation>
    <scope>NUCLEOTIDE SEQUENCE [LARGE SCALE GENOMIC DNA]</scope>
    <source>
        <strain>ATCC 51303 / DSM 11347 / YP87</strain>
    </source>
</reference>
<sequence>MSRFLQAEINLKSLIHNFSKIKAHLRNTRVSCKIIAIVKADAYGHGAVEVARVFGLLGVDYLGVAFSEEAIVLREAGIKVPIIVLFDREIEGVFKYNLIPVIFDYRQAEFLSKEASRRGVILPVHIKVETGMGRLGIYENPCETIKKIAQLDNLKIDGVMSHFSRAEDLEWTQEQMKKFSKIREFLHNLGMKPLFHIANSQGLNYKEALFDAVRPGLMLYGYGAEGFIPCMTVKTKLLDIRKLPKGTPISYGGTFVTKKDSLIGVIPVGYADGYFRSLSNKAEVIVRGKRVPVVGTVCMDLTMIDLTDIQEVQIDDEVILLGKTGSEEITASHIAQWAGTIPYEVLTSFGGRARRKYIMEEEE</sequence>
<keyword id="KW-0413">Isomerase</keyword>
<keyword id="KW-0663">Pyridoxal phosphate</keyword>
<keyword id="KW-1185">Reference proteome</keyword>
<gene>
    <name type="primary">alr</name>
    <name type="ordered locus">THEYE_A0341</name>
</gene>
<organism>
    <name type="scientific">Thermodesulfovibrio yellowstonii (strain ATCC 51303 / DSM 11347 / YP87)</name>
    <dbReference type="NCBI Taxonomy" id="289376"/>
    <lineage>
        <taxon>Bacteria</taxon>
        <taxon>Pseudomonadati</taxon>
        <taxon>Nitrospirota</taxon>
        <taxon>Thermodesulfovibrionia</taxon>
        <taxon>Thermodesulfovibrionales</taxon>
        <taxon>Thermodesulfovibrionaceae</taxon>
        <taxon>Thermodesulfovibrio</taxon>
    </lineage>
</organism>